<name>VE7_HPV24</name>
<sequence>MIGKEVTLQDIVLELTEPQTVDLHCEEELPEQDTEVEPERRAYKIILCCGGGCGTRLRLFVAATQFGIRGLQDLLLEEVVILCPDCRNSDLQHGGQ</sequence>
<feature type="chain" id="PRO_0000133422" description="Protein E7">
    <location>
        <begin position="1"/>
        <end position="96"/>
    </location>
</feature>
<feature type="zinc finger region" evidence="1">
    <location>
        <begin position="49"/>
        <end position="86"/>
    </location>
</feature>
<feature type="region of interest" description="E7 terminal domain" evidence="1">
    <location>
        <begin position="1"/>
        <end position="37"/>
    </location>
</feature>
<feature type="short sequence motif" description="LXCXE motif; interaction with host RB1 and TMEM173/STING" evidence="1">
    <location>
        <begin position="23"/>
        <end position="27"/>
    </location>
</feature>
<feature type="short sequence motif" description="Nuclear export signal" evidence="1">
    <location>
        <begin position="68"/>
        <end position="76"/>
    </location>
</feature>
<comment type="function">
    <text evidence="1">Plays a role in viral genome replication by driving entry of quiescent cells into the cell cycle. Stimulation of progression from G1 to S phase allows the virus to efficiently use the cellular DNA replicating machinery to achieve viral genome replication. E7 protein has both transforming and trans-activating activities. Induces the disassembly of the E2F1 transcription factor from RB1, with subsequent transcriptional activation of E2F1-regulated S-phase genes. Interferes with host histone deacetylation mediated by HDAC1 and HDAC2, leading to transcription activation. Also plays a role in the inhibition of both antiviral and antiproliferative functions of host interferon alpha. Interaction with host TMEM173/STING impairs the ability of TMEM173/STING to sense cytosolic DNA and promote the production of type I interferon (IFN-alpha and IFN-beta).</text>
</comment>
<comment type="subunit">
    <text evidence="1">Homodimer. Homooligomer. Interacts with host RB1; this interaction induces dissociation of RB1-E2F1 complex thereby disrupting RB1 activity. Interacts with host EP300; this interaction represses EP300 transcriptional activity. Interacts with protein E2; this interaction inhibits E7 oncogenic activity. Interacts with host TMEM173/STING; this interaction impairs the ability of TMEM173/STING to sense cytosolic DNA and promote the production of type I interferon (IFN-alpha and IFN-beta).</text>
</comment>
<comment type="subcellular location">
    <subcellularLocation>
        <location evidence="1">Host cytoplasm</location>
    </subcellularLocation>
    <subcellularLocation>
        <location evidence="1">Host nucleus</location>
    </subcellularLocation>
    <text evidence="1">Predominantly found in the host nucleus.</text>
</comment>
<comment type="domain">
    <text evidence="1">The E7 terminal domain is an intrinsically disordered domain, whose flexibility and conformational transitions confer target adaptability to the oncoprotein. It allows adaptation to a variety of protein targets and exposes the PEST degradation sequence that regulates its turnover in the cell.</text>
</comment>
<comment type="PTM">
    <text evidence="1">Highly phosphorylated.</text>
</comment>
<comment type="similarity">
    <text evidence="1">Belongs to the papillomaviridae E7 protein family.</text>
</comment>
<organismHost>
    <name type="scientific">Homo sapiens</name>
    <name type="common">Human</name>
    <dbReference type="NCBI Taxonomy" id="9606"/>
</organismHost>
<protein>
    <recommendedName>
        <fullName evidence="1">Protein E7</fullName>
    </recommendedName>
</protein>
<evidence type="ECO:0000255" key="1">
    <source>
        <dbReference type="HAMAP-Rule" id="MF_04004"/>
    </source>
</evidence>
<proteinExistence type="inferred from homology"/>
<gene>
    <name evidence="1" type="primary">E7</name>
</gene>
<organism>
    <name type="scientific">Human papillomavirus 24</name>
    <dbReference type="NCBI Taxonomy" id="37956"/>
    <lineage>
        <taxon>Viruses</taxon>
        <taxon>Monodnaviria</taxon>
        <taxon>Shotokuvirae</taxon>
        <taxon>Cossaviricota</taxon>
        <taxon>Papovaviricetes</taxon>
        <taxon>Zurhausenvirales</taxon>
        <taxon>Papillomaviridae</taxon>
        <taxon>Firstpapillomavirinae</taxon>
        <taxon>Betapapillomavirus</taxon>
        <taxon>Betapapillomavirus 1</taxon>
    </lineage>
</organism>
<accession>P50782</accession>
<reference key="1">
    <citation type="submission" date="1995-10" db="EMBL/GenBank/DDBJ databases">
        <authorList>
            <person name="Delius H."/>
        </authorList>
    </citation>
    <scope>NUCLEOTIDE SEQUENCE [GENOMIC DNA]</scope>
</reference>
<reference key="2">
    <citation type="journal article" date="2002" name="Rev. Med. Virol.">
        <title>Interactions of SV40 large T antigen and other viral proteins with retinoblastoma tumour suppressor.</title>
        <authorList>
            <person name="Lee C."/>
            <person name="Cho Y."/>
        </authorList>
    </citation>
    <scope>REVIEW</scope>
</reference>
<keyword id="KW-0010">Activator</keyword>
<keyword id="KW-0238">DNA-binding</keyword>
<keyword id="KW-0244">Early protein</keyword>
<keyword id="KW-1078">G1/S host cell cycle checkpoint dysregulation by virus</keyword>
<keyword id="KW-1035">Host cytoplasm</keyword>
<keyword id="KW-1048">Host nucleus</keyword>
<keyword id="KW-0945">Host-virus interaction</keyword>
<keyword id="KW-1090">Inhibition of host innate immune response by virus</keyword>
<keyword id="KW-1114">Inhibition of host interferon signaling pathway by virus</keyword>
<keyword id="KW-0922">Interferon antiviral system evasion</keyword>
<keyword id="KW-0479">Metal-binding</keyword>
<keyword id="KW-1121">Modulation of host cell cycle by virus</keyword>
<keyword id="KW-0553">Oncogene</keyword>
<keyword id="KW-1185">Reference proteome</keyword>
<keyword id="KW-0804">Transcription</keyword>
<keyword id="KW-0805">Transcription regulation</keyword>
<keyword id="KW-0899">Viral immunoevasion</keyword>
<keyword id="KW-0862">Zinc</keyword>
<keyword id="KW-0863">Zinc-finger</keyword>
<dbReference type="EMBL" id="U31782">
    <property type="protein sequence ID" value="AAA79416.1"/>
    <property type="molecule type" value="Genomic_DNA"/>
</dbReference>
<dbReference type="SMR" id="P50782"/>
<dbReference type="Proteomes" id="UP000158064">
    <property type="component" value="Genome"/>
</dbReference>
<dbReference type="GO" id="GO:0030430">
    <property type="term" value="C:host cell cytoplasm"/>
    <property type="evidence" value="ECO:0007669"/>
    <property type="project" value="UniProtKB-SubCell"/>
</dbReference>
<dbReference type="GO" id="GO:0042025">
    <property type="term" value="C:host cell nucleus"/>
    <property type="evidence" value="ECO:0007669"/>
    <property type="project" value="UniProtKB-SubCell"/>
</dbReference>
<dbReference type="GO" id="GO:0003677">
    <property type="term" value="F:DNA binding"/>
    <property type="evidence" value="ECO:0007669"/>
    <property type="project" value="UniProtKB-UniRule"/>
</dbReference>
<dbReference type="GO" id="GO:0003700">
    <property type="term" value="F:DNA-binding transcription factor activity"/>
    <property type="evidence" value="ECO:0007669"/>
    <property type="project" value="UniProtKB-UniRule"/>
</dbReference>
<dbReference type="GO" id="GO:0019904">
    <property type="term" value="F:protein domain specific binding"/>
    <property type="evidence" value="ECO:0007669"/>
    <property type="project" value="UniProtKB-UniRule"/>
</dbReference>
<dbReference type="GO" id="GO:0008270">
    <property type="term" value="F:zinc ion binding"/>
    <property type="evidence" value="ECO:0007669"/>
    <property type="project" value="UniProtKB-KW"/>
</dbReference>
<dbReference type="GO" id="GO:0006351">
    <property type="term" value="P:DNA-templated transcription"/>
    <property type="evidence" value="ECO:0007669"/>
    <property type="project" value="UniProtKB-UniRule"/>
</dbReference>
<dbReference type="GO" id="GO:0039645">
    <property type="term" value="P:symbiont-mediated perturbation of host cell cycle G1/S transition checkpoint"/>
    <property type="evidence" value="ECO:0007669"/>
    <property type="project" value="UniProtKB-UniRule"/>
</dbReference>
<dbReference type="GO" id="GO:0052170">
    <property type="term" value="P:symbiont-mediated suppression of host innate immune response"/>
    <property type="evidence" value="ECO:0007669"/>
    <property type="project" value="UniProtKB-KW"/>
</dbReference>
<dbReference type="GO" id="GO:0039502">
    <property type="term" value="P:symbiont-mediated suppression of host type I interferon-mediated signaling pathway"/>
    <property type="evidence" value="ECO:0007669"/>
    <property type="project" value="UniProtKB-UniRule"/>
</dbReference>
<dbReference type="Gene3D" id="3.30.160.330">
    <property type="match status" value="1"/>
</dbReference>
<dbReference type="HAMAP" id="MF_04004">
    <property type="entry name" value="PPV_E7"/>
    <property type="match status" value="1"/>
</dbReference>
<dbReference type="InterPro" id="IPR000148">
    <property type="entry name" value="Papilloma_E7"/>
</dbReference>
<dbReference type="Pfam" id="PF00527">
    <property type="entry name" value="E7"/>
    <property type="match status" value="1"/>
</dbReference>
<dbReference type="PIRSF" id="PIRSF003407">
    <property type="entry name" value="Papvi_E7"/>
    <property type="match status" value="1"/>
</dbReference>
<dbReference type="SUPFAM" id="SSF161234">
    <property type="entry name" value="E7 C-terminal domain-like"/>
    <property type="match status" value="1"/>
</dbReference>